<proteinExistence type="predicted"/>
<dbReference type="EMBL" id="L42023">
    <property type="protein sequence ID" value="AAC23053.1"/>
    <property type="molecule type" value="Genomic_DNA"/>
</dbReference>
<dbReference type="PIR" id="H64027">
    <property type="entry name" value="H64027"/>
</dbReference>
<dbReference type="RefSeq" id="NP_439556.1">
    <property type="nucleotide sequence ID" value="NC_000907.1"/>
</dbReference>
<dbReference type="STRING" id="71421.HI_1403"/>
<dbReference type="EnsemblBacteria" id="AAC23053">
    <property type="protein sequence ID" value="AAC23053"/>
    <property type="gene ID" value="HI_1403"/>
</dbReference>
<dbReference type="KEGG" id="hin:HI_1403"/>
<dbReference type="PATRIC" id="fig|71421.8.peg.1463"/>
<dbReference type="eggNOG" id="COG5301">
    <property type="taxonomic scope" value="Bacteria"/>
</dbReference>
<dbReference type="HOGENOM" id="CLU_112837_0_0_6"/>
<dbReference type="BioCyc" id="HINF71421:G1GJ1-1429-MONOMER"/>
<dbReference type="Proteomes" id="UP000000579">
    <property type="component" value="Chromosome"/>
</dbReference>
<dbReference type="GO" id="GO:0046718">
    <property type="term" value="P:symbiont entry into host cell"/>
    <property type="evidence" value="ECO:0007669"/>
    <property type="project" value="InterPro"/>
</dbReference>
<dbReference type="GO" id="GO:0019062">
    <property type="term" value="P:virion attachment to host cell"/>
    <property type="evidence" value="ECO:0007669"/>
    <property type="project" value="InterPro"/>
</dbReference>
<dbReference type="InterPro" id="IPR005068">
    <property type="entry name" value="Phage_lambda_Stf-r2"/>
</dbReference>
<dbReference type="Pfam" id="PF03406">
    <property type="entry name" value="Phage_fiber_2"/>
    <property type="match status" value="1"/>
</dbReference>
<accession>P44178</accession>
<sequence length="182" mass="20536">MKAFLHHLQNEAKLIISLTYCVDGEFALNEIARATLQQYGIVQLSSATNSDSETEAATSKAVKTAYDKAVEAKTTADGKVGLNGNESINGEKTFENRIVAKRNIRISDSPHYASRGDYLNIGANNGDCWFEYKLSNQEIGTLRMHANGDLTYKRQKIYLKMDCWQAIHKRKLKVFTAKRKKR</sequence>
<reference key="1">
    <citation type="journal article" date="1995" name="Science">
        <title>Whole-genome random sequencing and assembly of Haemophilus influenzae Rd.</title>
        <authorList>
            <person name="Fleischmann R.D."/>
            <person name="Adams M.D."/>
            <person name="White O."/>
            <person name="Clayton R.A."/>
            <person name="Kirkness E.F."/>
            <person name="Kerlavage A.R."/>
            <person name="Bult C.J."/>
            <person name="Tomb J.-F."/>
            <person name="Dougherty B.A."/>
            <person name="Merrick J.M."/>
            <person name="McKenney K."/>
            <person name="Sutton G.G."/>
            <person name="FitzHugh W."/>
            <person name="Fields C.A."/>
            <person name="Gocayne J.D."/>
            <person name="Scott J.D."/>
            <person name="Shirley R."/>
            <person name="Liu L.-I."/>
            <person name="Glodek A."/>
            <person name="Kelley J.M."/>
            <person name="Weidman J.F."/>
            <person name="Phillips C.A."/>
            <person name="Spriggs T."/>
            <person name="Hedblom E."/>
            <person name="Cotton M.D."/>
            <person name="Utterback T.R."/>
            <person name="Hanna M.C."/>
            <person name="Nguyen D.T."/>
            <person name="Saudek D.M."/>
            <person name="Brandon R.C."/>
            <person name="Fine L.D."/>
            <person name="Fritchman J.L."/>
            <person name="Fuhrmann J.L."/>
            <person name="Geoghagen N.S.M."/>
            <person name="Gnehm C.L."/>
            <person name="McDonald L.A."/>
            <person name="Small K.V."/>
            <person name="Fraser C.M."/>
            <person name="Smith H.O."/>
            <person name="Venter J.C."/>
        </authorList>
    </citation>
    <scope>NUCLEOTIDE SEQUENCE [LARGE SCALE GENOMIC DNA]</scope>
    <source>
        <strain>ATCC 51907 / DSM 11121 / KW20 / Rd</strain>
    </source>
</reference>
<keyword id="KW-1185">Reference proteome</keyword>
<protein>
    <recommendedName>
        <fullName>Uncharacterized protein HI_1403</fullName>
    </recommendedName>
</protein>
<gene>
    <name type="ordered locus">HI_1403</name>
</gene>
<feature type="chain" id="PRO_0000078041" description="Uncharacterized protein HI_1403">
    <location>
        <begin position="1"/>
        <end position="182"/>
    </location>
</feature>
<name>Y1403_HAEIN</name>
<organism>
    <name type="scientific">Haemophilus influenzae (strain ATCC 51907 / DSM 11121 / KW20 / Rd)</name>
    <dbReference type="NCBI Taxonomy" id="71421"/>
    <lineage>
        <taxon>Bacteria</taxon>
        <taxon>Pseudomonadati</taxon>
        <taxon>Pseudomonadota</taxon>
        <taxon>Gammaproteobacteria</taxon>
        <taxon>Pasteurellales</taxon>
        <taxon>Pasteurellaceae</taxon>
        <taxon>Haemophilus</taxon>
    </lineage>
</organism>